<proteinExistence type="evidence at protein level"/>
<evidence type="ECO:0000250" key="1">
    <source>
        <dbReference type="UniProtKB" id="A0A223GEC9"/>
    </source>
</evidence>
<evidence type="ECO:0000250" key="2">
    <source>
        <dbReference type="UniProtKB" id="A0A482A9N4"/>
    </source>
</evidence>
<evidence type="ECO:0000250" key="3">
    <source>
        <dbReference type="UniProtKB" id="Q1K8B6"/>
    </source>
</evidence>
<evidence type="ECO:0000250" key="4">
    <source>
        <dbReference type="UniProtKB" id="Q4WP32"/>
    </source>
</evidence>
<evidence type="ECO:0000255" key="5"/>
<evidence type="ECO:0000255" key="6">
    <source>
        <dbReference type="PROSITE-ProRule" id="PRU00498"/>
    </source>
</evidence>
<evidence type="ECO:0000269" key="7">
    <source>
    </source>
</evidence>
<evidence type="ECO:0000303" key="8">
    <source>
    </source>
</evidence>
<evidence type="ECO:0000305" key="9"/>
<evidence type="ECO:0000305" key="10">
    <source>
    </source>
</evidence>
<keyword id="KW-0119">Carbohydrate metabolism</keyword>
<keyword id="KW-0136">Cellulose degradation</keyword>
<keyword id="KW-0186">Copper</keyword>
<keyword id="KW-1015">Disulfide bond</keyword>
<keyword id="KW-0325">Glycoprotein</keyword>
<keyword id="KW-0479">Metal-binding</keyword>
<keyword id="KW-0503">Monooxygenase</keyword>
<keyword id="KW-0560">Oxidoreductase</keyword>
<keyword id="KW-0624">Polysaccharide degradation</keyword>
<keyword id="KW-0964">Secreted</keyword>
<keyword id="KW-0732">Signal</keyword>
<protein>
    <recommendedName>
        <fullName evidence="8">AA9 family lytic polysaccharide monooxygenase A</fullName>
        <shortName evidence="8">TcAA9A</shortName>
        <ecNumber evidence="7">1.14.99.56</ecNumber>
    </recommendedName>
    <alternativeName>
        <fullName evidence="9">Cellulase AA9A</fullName>
    </alternativeName>
    <alternativeName>
        <fullName evidence="9">Endo-beta-1,4-glucanase AA9A</fullName>
        <shortName evidence="9">Endoglucanase AA9A</shortName>
    </alternativeName>
    <alternativeName>
        <fullName evidence="9">Glycosyl hydrolase 61 family protein AA9A</fullName>
    </alternativeName>
</protein>
<feature type="signal peptide" evidence="5">
    <location>
        <begin position="1"/>
        <end position="21"/>
    </location>
</feature>
<feature type="chain" id="PRO_5019870967" description="AA9 family lytic polysaccharide monooxygenase A">
    <location>
        <begin position="22"/>
        <end position="310"/>
    </location>
</feature>
<feature type="binding site" evidence="1">
    <location>
        <position position="22"/>
    </location>
    <ligand>
        <name>Cu(2+)</name>
        <dbReference type="ChEBI" id="CHEBI:29036"/>
        <note>catalytic</note>
    </ligand>
</feature>
<feature type="binding site" evidence="1">
    <location>
        <position position="107"/>
    </location>
    <ligand>
        <name>Cu(2+)</name>
        <dbReference type="ChEBI" id="CHEBI:29036"/>
        <note>catalytic</note>
    </ligand>
</feature>
<feature type="binding site" evidence="3">
    <location>
        <position position="185"/>
    </location>
    <ligand>
        <name>O2</name>
        <dbReference type="ChEBI" id="CHEBI:15379"/>
    </ligand>
</feature>
<feature type="binding site" evidence="1">
    <location>
        <position position="196"/>
    </location>
    <ligand>
        <name>Cu(2+)</name>
        <dbReference type="ChEBI" id="CHEBI:29036"/>
        <note>catalytic</note>
    </ligand>
</feature>
<feature type="glycosylation site" description="N-linked (GlcNAc...) asparagine" evidence="6">
    <location>
        <position position="121"/>
    </location>
</feature>
<feature type="glycosylation site" description="N-linked (GlcNAc...) asparagine" evidence="6">
    <location>
        <position position="159"/>
    </location>
</feature>
<feature type="disulfide bond" evidence="2">
    <location>
        <begin position="77"/>
        <end position="199"/>
    </location>
</feature>
<feature type="disulfide bond" evidence="2">
    <location>
        <begin position="118"/>
        <end position="122"/>
    </location>
</feature>
<name>LP9A_TALPI</name>
<reference key="1">
    <citation type="journal article" date="2015" name="Genome Announc.">
        <title>Draft genome sequence of Talaromyces cellulolyticus strain Y-94, a source of lignocellulosic biomass-degrading enzymes.</title>
        <authorList>
            <person name="Fujii T."/>
            <person name="Koike H."/>
            <person name="Sawayama S."/>
            <person name="Yano S."/>
            <person name="Inoue H."/>
        </authorList>
    </citation>
    <scope>NUCLEOTIDE SEQUENCE [LARGE SCALE GENOMIC DNA]</scope>
    <source>
        <strain>Y-94</strain>
    </source>
</reference>
<reference key="2">
    <citation type="journal article" date="2019" name="Appl. Microbiol. Biotechnol.">
        <title>Identification of a thermostable fungal lytic polysaccharide monooxygenase and evaluation of its effect on lignocellulosic degradation.</title>
        <authorList>
            <person name="Zhang R."/>
            <person name="Liu Y."/>
            <person name="Zhang Y."/>
            <person name="Feng D."/>
            <person name="Hou S."/>
            <person name="Guo W."/>
            <person name="Niu K."/>
            <person name="Jiang Y."/>
            <person name="Han L."/>
            <person name="Sindhu L."/>
            <person name="Fang X."/>
        </authorList>
    </citation>
    <scope>FUNCTION</scope>
    <scope>CATALYTIC ACTIVITY</scope>
    <scope>BIOPHYSICOCHEMICAL PROPERTIES</scope>
    <scope>SUBSTRATE SPECIFICITY</scope>
</reference>
<organism>
    <name type="scientific">Talaromyces pinophilus</name>
    <name type="common">Penicillium pinophilum</name>
    <dbReference type="NCBI Taxonomy" id="128442"/>
    <lineage>
        <taxon>Eukaryota</taxon>
        <taxon>Fungi</taxon>
        <taxon>Dikarya</taxon>
        <taxon>Ascomycota</taxon>
        <taxon>Pezizomycotina</taxon>
        <taxon>Eurotiomycetes</taxon>
        <taxon>Eurotiomycetidae</taxon>
        <taxon>Eurotiales</taxon>
        <taxon>Trichocomaceae</taxon>
        <taxon>Talaromyces</taxon>
        <taxon>Talaromyces sect. Talaromyces</taxon>
    </lineage>
</organism>
<gene>
    <name evidence="8" type="primary">AA9A</name>
    <name type="ORF">TCE0_044r17407</name>
</gene>
<accession>A0A478ECY3</accession>
<sequence length="310" mass="31323">MPSTKVAALSAVLALASTVAGHGFVQNIVIDGKSYSGYLVNQFPYESNPPAVIGWATTATDLGFVAPSEYTNADIICHKNATPGALSAPVAAGGTVELQWTTWPDSHHGPVISYLANCNGNCSTVDKTKLNFVKIDQGGLIDDTTPPGTWASDKLIAANNSWTVTIPSTIAPGNYVLRHEIIALHSAGNADGAQNYPQCINLEITGSGTAAPSGTAGEKLYTSTDPGILVNIYQSFGAANGAVATGSATAVATTAAASATATPTTLVTSVAPASSTSATAVVTTVAPAVTDVVTVTDVVTVTTVITTTVL</sequence>
<comment type="function">
    <text evidence="7">Lytic polysaccharide monooxygenase (LPMO) that depolymerizes crystalline and amorphous polysaccharides via the oxidation of scissile alpha- or beta-(1-4)-glycosidic bonds, yielding C1, C4 as well as C6 oxidation products (PubMed:31152202). Catalysis by LPMOs requires the reduction of the active-site copper from Cu(II) to Cu(I) by a reducing agent and H(2)O(2) or O(2) as a cosubstrate (PubMed:31152202). Active on cellulose, but not on xylan, starch, or chitin (PubMed:31152202).</text>
</comment>
<comment type="catalytic activity">
    <reaction evidence="7">
        <text>[(1-&gt;4)-beta-D-glucosyl]n+m + reduced acceptor + O2 = 4-dehydro-beta-D-glucosyl-[(1-&gt;4)-beta-D-glucosyl]n-1 + [(1-&gt;4)-beta-D-glucosyl]m + acceptor + H2O.</text>
        <dbReference type="EC" id="1.14.99.56"/>
    </reaction>
</comment>
<comment type="cofactor">
    <cofactor evidence="4">
        <name>Cu(2+)</name>
        <dbReference type="ChEBI" id="CHEBI:29036"/>
    </cofactor>
    <text evidence="4">Binds 1 copper ion per subunit.</text>
</comment>
<comment type="biophysicochemical properties">
    <temperatureDependence>
        <text evidence="7">Optimum temperature is 40 to 45 degrees Celsius.</text>
    </temperatureDependence>
</comment>
<comment type="subcellular location">
    <subcellularLocation>
        <location evidence="10">Secreted</location>
    </subcellularLocation>
</comment>
<comment type="biotechnology">
    <text evidence="4">Lignocellulose is the most abundant polymeric composite on Earth and is a recalcitrant but promising renewable substrate for industrial biotechnology applications. Together with cellobiose dehydrogenases (CDHs) an enzymatic system capable of oxidative cellulose cleavage is formed, which increases the efficiency of cellulases and put LPMOs at focus of biofuel research.</text>
</comment>
<comment type="similarity">
    <text evidence="9">Belongs to the polysaccharide monooxygenase AA9 family.</text>
</comment>
<dbReference type="EC" id="1.14.99.56" evidence="7"/>
<dbReference type="EMBL" id="DF933840">
    <property type="protein sequence ID" value="GAM42970.1"/>
    <property type="molecule type" value="Genomic_DNA"/>
</dbReference>
<dbReference type="SMR" id="A0A478ECY3"/>
<dbReference type="Proteomes" id="UP000053095">
    <property type="component" value="Unassembled WGS sequence"/>
</dbReference>
<dbReference type="GO" id="GO:0005576">
    <property type="term" value="C:extracellular region"/>
    <property type="evidence" value="ECO:0007669"/>
    <property type="project" value="UniProtKB-SubCell"/>
</dbReference>
<dbReference type="GO" id="GO:0046872">
    <property type="term" value="F:metal ion binding"/>
    <property type="evidence" value="ECO:0007669"/>
    <property type="project" value="UniProtKB-KW"/>
</dbReference>
<dbReference type="GO" id="GO:0004497">
    <property type="term" value="F:monooxygenase activity"/>
    <property type="evidence" value="ECO:0007669"/>
    <property type="project" value="UniProtKB-KW"/>
</dbReference>
<dbReference type="GO" id="GO:0030245">
    <property type="term" value="P:cellulose catabolic process"/>
    <property type="evidence" value="ECO:0007669"/>
    <property type="project" value="UniProtKB-KW"/>
</dbReference>
<dbReference type="CDD" id="cd21175">
    <property type="entry name" value="LPMO_AA9"/>
    <property type="match status" value="1"/>
</dbReference>
<dbReference type="Gene3D" id="2.70.50.70">
    <property type="match status" value="1"/>
</dbReference>
<dbReference type="InterPro" id="IPR049892">
    <property type="entry name" value="AA9"/>
</dbReference>
<dbReference type="InterPro" id="IPR005103">
    <property type="entry name" value="AA9_LPMO"/>
</dbReference>
<dbReference type="PANTHER" id="PTHR33353:SF34">
    <property type="entry name" value="ENDO-BETA-1,4-GLUCANASE D"/>
    <property type="match status" value="1"/>
</dbReference>
<dbReference type="PANTHER" id="PTHR33353">
    <property type="entry name" value="PUTATIVE (AFU_ORTHOLOGUE AFUA_1G12560)-RELATED"/>
    <property type="match status" value="1"/>
</dbReference>
<dbReference type="Pfam" id="PF03443">
    <property type="entry name" value="AA9"/>
    <property type="match status" value="1"/>
</dbReference>